<keyword id="KW-0027">Amidation</keyword>
<keyword id="KW-0878">Amphibian defense peptide</keyword>
<keyword id="KW-0929">Antimicrobial</keyword>
<keyword id="KW-0903">Direct protein sequencing</keyword>
<keyword id="KW-0964">Secreted</keyword>
<proteinExistence type="evidence at protein level"/>
<protein>
    <recommendedName>
        <fullName evidence="3">Phylloseptin-O1</fullName>
        <shortName evidence="3">PLS-O1</shortName>
    </recommendedName>
    <alternativeName>
        <fullName evidence="2">Phylloseptin-4</fullName>
        <shortName evidence="2">PS-4</shortName>
    </alternativeName>
</protein>
<organism>
    <name type="scientific">Pithecopus oreades</name>
    <name type="common">Orange-legged leaf frog</name>
    <name type="synonym">Phyllomedusa oreades</name>
    <dbReference type="NCBI Taxonomy" id="239355"/>
    <lineage>
        <taxon>Eukaryota</taxon>
        <taxon>Metazoa</taxon>
        <taxon>Chordata</taxon>
        <taxon>Craniata</taxon>
        <taxon>Vertebrata</taxon>
        <taxon>Euteleostomi</taxon>
        <taxon>Amphibia</taxon>
        <taxon>Batrachia</taxon>
        <taxon>Anura</taxon>
        <taxon>Neobatrachia</taxon>
        <taxon>Hyloidea</taxon>
        <taxon>Hylidae</taxon>
        <taxon>Phyllomedusinae</taxon>
        <taxon>Pithecopus</taxon>
    </lineage>
</organism>
<dbReference type="GO" id="GO:0005576">
    <property type="term" value="C:extracellular region"/>
    <property type="evidence" value="ECO:0007669"/>
    <property type="project" value="UniProtKB-SubCell"/>
</dbReference>
<dbReference type="GO" id="GO:0006952">
    <property type="term" value="P:defense response"/>
    <property type="evidence" value="ECO:0007669"/>
    <property type="project" value="UniProtKB-KW"/>
</dbReference>
<sequence length="20" mass="2113">FLSLIPHAINAVSTLVHHSG</sequence>
<reference evidence="4" key="1">
    <citation type="journal article" date="2005" name="Peptides">
        <title>Phylloseptins: a novel class of anti-bacterial and anti-protozoan peptides from the Phyllomedusa genus.</title>
        <authorList>
            <person name="Leite J.R.S.A."/>
            <person name="Silva L.P."/>
            <person name="Rodrigues M.I.S."/>
            <person name="Prates M.V."/>
            <person name="Brand G.D."/>
            <person name="Lacava B.M."/>
            <person name="Azevedo R.B."/>
            <person name="Bocca A.L."/>
            <person name="Albuquerque S."/>
            <person name="Bloch C. Jr."/>
        </authorList>
    </citation>
    <scope>PROTEIN SEQUENCE</scope>
    <scope>FUNCTION</scope>
    <scope>SUBCELLULAR LOCATION</scope>
    <scope>TISSUE SPECIFICITY</scope>
    <scope>MASS SPECTROMETRY</scope>
    <scope>AMIDATION AT GLY-20</scope>
    <source>
        <tissue evidence="1">Skin secretion</tissue>
    </source>
</reference>
<reference key="2">
    <citation type="journal article" date="2008" name="Peptides">
        <title>A consistent nomenclature of antimicrobial peptides isolated from frogs of the subfamily Phyllomedusinae.</title>
        <authorList>
            <person name="Amiche M."/>
            <person name="Ladram A."/>
            <person name="Nicolas P."/>
        </authorList>
    </citation>
    <scope>NOMENCLATURE</scope>
</reference>
<comment type="function">
    <text evidence="1">Has antiprotozoal activity against T.cruzi.</text>
</comment>
<comment type="subcellular location">
    <subcellularLocation>
        <location evidence="1">Secreted</location>
    </subcellularLocation>
</comment>
<comment type="tissue specificity">
    <text evidence="1">Expressed by the skin glands.</text>
</comment>
<comment type="mass spectrometry" mass="2112.18" method="MALDI" evidence="1"/>
<comment type="similarity">
    <text evidence="4">Belongs to the frog skin active peptide (FSAP) family. Phylloseptin subfamily.</text>
</comment>
<comment type="online information" name="The antimicrobial peptide database">
    <link uri="https://wangapd3.com/database/query_output.php?ID=00759"/>
</comment>
<gene>
    <name type="primary">psn4</name>
    <name type="synonym">psn-4</name>
</gene>
<evidence type="ECO:0000269" key="1">
    <source>
    </source>
</evidence>
<evidence type="ECO:0000303" key="2">
    <source>
    </source>
</evidence>
<evidence type="ECO:0000303" key="3">
    <source>
    </source>
</evidence>
<evidence type="ECO:0000305" key="4"/>
<feature type="peptide" id="PRO_0000043825" description="Phylloseptin-O1">
    <location>
        <begin position="1"/>
        <end position="20"/>
    </location>
</feature>
<feature type="modified residue" description="Glycine amide" evidence="1">
    <location>
        <position position="20"/>
    </location>
</feature>
<accession>P84569</accession>
<name>PLS1_PITOR</name>